<dbReference type="EMBL" id="AF144704">
    <property type="protein sequence ID" value="AAD39955.1"/>
    <property type="molecule type" value="mRNA"/>
</dbReference>
<dbReference type="EMBL" id="Z96047">
    <property type="protein sequence ID" value="CAB09410.1"/>
    <property type="molecule type" value="Genomic_DNA"/>
</dbReference>
<dbReference type="PIR" id="T20389">
    <property type="entry name" value="T20389"/>
</dbReference>
<dbReference type="RefSeq" id="NP_492370.1">
    <property type="nucleotide sequence ID" value="NM_059969.7"/>
</dbReference>
<dbReference type="SMR" id="O45319"/>
<dbReference type="BioGRID" id="38119">
    <property type="interactions" value="7"/>
</dbReference>
<dbReference type="FunCoup" id="O45319">
    <property type="interactions" value="1937"/>
</dbReference>
<dbReference type="STRING" id="6239.DY3.1.1"/>
<dbReference type="PaxDb" id="6239-DY3.1"/>
<dbReference type="PeptideAtlas" id="O45319"/>
<dbReference type="EnsemblMetazoa" id="DY3.1.1">
    <property type="protein sequence ID" value="DY3.1.1"/>
    <property type="gene ID" value="WBGene00006574"/>
</dbReference>
<dbReference type="GeneID" id="172686"/>
<dbReference type="KEGG" id="cel:CELE_DY3.1"/>
<dbReference type="UCSC" id="DY3.1">
    <property type="organism name" value="c. elegans"/>
</dbReference>
<dbReference type="AGR" id="WB:WBGene00006574"/>
<dbReference type="CTD" id="172686"/>
<dbReference type="WormBase" id="DY3.1">
    <property type="protein sequence ID" value="CE15745"/>
    <property type="gene ID" value="WBGene00006574"/>
    <property type="gene designation" value="tin-13"/>
</dbReference>
<dbReference type="eggNOG" id="KOG1733">
    <property type="taxonomic scope" value="Eukaryota"/>
</dbReference>
<dbReference type="GeneTree" id="ENSGT00390000014000"/>
<dbReference type="HOGENOM" id="CLU_141397_0_0_1"/>
<dbReference type="InParanoid" id="O45319"/>
<dbReference type="OMA" id="MAAWNQV"/>
<dbReference type="OrthoDB" id="7813104at2759"/>
<dbReference type="PhylomeDB" id="O45319"/>
<dbReference type="PRO" id="PR:O45319"/>
<dbReference type="Proteomes" id="UP000001940">
    <property type="component" value="Chromosome I"/>
</dbReference>
<dbReference type="Bgee" id="WBGene00006574">
    <property type="expression patterns" value="Expressed in germ line (C elegans) and 4 other cell types or tissues"/>
</dbReference>
<dbReference type="GO" id="GO:0005743">
    <property type="term" value="C:mitochondrial inner membrane"/>
    <property type="evidence" value="ECO:0007669"/>
    <property type="project" value="UniProtKB-SubCell"/>
</dbReference>
<dbReference type="GO" id="GO:0042719">
    <property type="term" value="C:mitochondrial intermembrane space protein transporter complex"/>
    <property type="evidence" value="ECO:0000318"/>
    <property type="project" value="GO_Central"/>
</dbReference>
<dbReference type="GO" id="GO:0046872">
    <property type="term" value="F:metal ion binding"/>
    <property type="evidence" value="ECO:0007669"/>
    <property type="project" value="UniProtKB-KW"/>
</dbReference>
<dbReference type="GO" id="GO:0045039">
    <property type="term" value="P:protein insertion into mitochondrial inner membrane"/>
    <property type="evidence" value="ECO:0000318"/>
    <property type="project" value="GO_Central"/>
</dbReference>
<dbReference type="FunFam" id="1.10.287.810:FF:000001">
    <property type="entry name" value="mitochondrial import inner membrane translocase subunit TIM13"/>
    <property type="match status" value="1"/>
</dbReference>
<dbReference type="Gene3D" id="1.10.287.810">
    <property type="entry name" value="Mitochondrial import inner membrane translocase subunit tim13 like domains"/>
    <property type="match status" value="1"/>
</dbReference>
<dbReference type="InterPro" id="IPR004217">
    <property type="entry name" value="Tim10-like"/>
</dbReference>
<dbReference type="InterPro" id="IPR035427">
    <property type="entry name" value="Tim10-like_dom_sf"/>
</dbReference>
<dbReference type="Pfam" id="PF02953">
    <property type="entry name" value="zf-Tim10_DDP"/>
    <property type="match status" value="1"/>
</dbReference>
<dbReference type="SUPFAM" id="SSF144122">
    <property type="entry name" value="Tim10-like"/>
    <property type="match status" value="1"/>
</dbReference>
<gene>
    <name type="primary">tin-13</name>
    <name type="synonym">tim-13</name>
    <name type="ORF">DY3.1</name>
</gene>
<feature type="chain" id="PRO_0000193627" description="Mitochondrial import inner membrane translocase subunit tim-13">
    <location>
        <begin position="1"/>
        <end position="108"/>
    </location>
</feature>
<feature type="region of interest" description="Disordered" evidence="2">
    <location>
        <begin position="89"/>
        <end position="108"/>
    </location>
</feature>
<feature type="short sequence motif" description="Twin CX3C motif">
    <location>
        <begin position="45"/>
        <end position="68"/>
    </location>
</feature>
<feature type="compositionally biased region" description="Gly residues" evidence="2">
    <location>
        <begin position="95"/>
        <end position="108"/>
    </location>
</feature>
<feature type="disulfide bond" evidence="1">
    <location>
        <begin position="45"/>
        <end position="68"/>
    </location>
</feature>
<feature type="disulfide bond" evidence="1">
    <location>
        <begin position="49"/>
        <end position="64"/>
    </location>
</feature>
<evidence type="ECO:0000250" key="1"/>
<evidence type="ECO:0000256" key="2">
    <source>
        <dbReference type="SAM" id="MobiDB-lite"/>
    </source>
</evidence>
<evidence type="ECO:0000305" key="3"/>
<protein>
    <recommendedName>
        <fullName>Mitochondrial import inner membrane translocase subunit tim-13</fullName>
    </recommendedName>
</protein>
<reference key="1">
    <citation type="journal article" date="1999" name="FEBS Lett.">
        <title>The mitochondrial TIM22 preprotein translocase is highly conserved throughout the eukaryotic kingdom.</title>
        <authorList>
            <person name="Bauer M.F."/>
            <person name="Rothbauer U."/>
            <person name="Muehlenbein N."/>
            <person name="Smith R.J.H."/>
            <person name="Gerbitz K.-D."/>
            <person name="Neupert W."/>
            <person name="Brunner M."/>
            <person name="Hofmann S."/>
        </authorList>
    </citation>
    <scope>NUCLEOTIDE SEQUENCE [MRNA]</scope>
</reference>
<reference key="2">
    <citation type="journal article" date="1998" name="Science">
        <title>Genome sequence of the nematode C. elegans: a platform for investigating biology.</title>
        <authorList>
            <consortium name="The C. elegans sequencing consortium"/>
        </authorList>
    </citation>
    <scope>NUCLEOTIDE SEQUENCE [LARGE SCALE GENOMIC DNA]</scope>
    <source>
        <strain>Bristol N2</strain>
    </source>
</reference>
<accession>O45319</accession>
<organism>
    <name type="scientific">Caenorhabditis elegans</name>
    <dbReference type="NCBI Taxonomy" id="6239"/>
    <lineage>
        <taxon>Eukaryota</taxon>
        <taxon>Metazoa</taxon>
        <taxon>Ecdysozoa</taxon>
        <taxon>Nematoda</taxon>
        <taxon>Chromadorea</taxon>
        <taxon>Rhabditida</taxon>
        <taxon>Rhabditina</taxon>
        <taxon>Rhabditomorpha</taxon>
        <taxon>Rhabditoidea</taxon>
        <taxon>Rhabditidae</taxon>
        <taxon>Peloderinae</taxon>
        <taxon>Caenorhabditis</taxon>
    </lineage>
</organism>
<sequence length="108" mass="11685">MDQLLDVETLKKLSPEQQEQVISGVKQQAALANAQNLVTDISEKCTNKCITAPGSSLASGEKQCLQRCMDRFMESWNLVSQTLQKRLQEEMASSGGMGGGFGQGPSFS</sequence>
<proteinExistence type="inferred from homology"/>
<comment type="function">
    <text evidence="1">Mitochondrial intermembrane chaperone that participates in the import and insertion of some multi-pass transmembrane proteins into the mitochondrial inner membrane. Also required for the transfer of beta-barrel precursors from the TOM complex to the sorting and assembly machinery (SAM complex) of the outer membrane. Acts as a chaperone-like protein that protects the hydrophobic precursors from aggregation and guide them through the mitochondrial intermembrane space. The tim-8-tim-13 complex mediates the import of some proteins while the predominant tim-9/tin-9.1-tim-10/tin-10 70 kDa complex mediates the import of much more proteins (By similarity).</text>
</comment>
<comment type="subunit">
    <text evidence="1">Heterohexamer; composed of 3 copies of tim-8/ddp-1 and 3 copies of tin-13/tim-13, named soluble 70 kDa complex. Associates with the TIM22 complex, whose core is composed of tim-22 (By similarity).</text>
</comment>
<comment type="subcellular location">
    <subcellularLocation>
        <location evidence="1">Mitochondrion inner membrane</location>
        <topology evidence="1">Peripheral membrane protein</topology>
        <orientation evidence="1">Intermembrane side</orientation>
    </subcellularLocation>
</comment>
<comment type="domain">
    <text evidence="1">The twin CX3C motif contains 4 conserved Cys residues that form 2 disulfide bonds in the mitochondrial intermembrane space. However, during the transit of tin-13/tim-13 from cytoplasm into mitochondrion, the Cys residues probably coordinate zinc, thereby preventing folding and allowing its transfer across mitochondrial outer membrane (By similarity).</text>
</comment>
<comment type="similarity">
    <text evidence="3">Belongs to the small Tim family.</text>
</comment>
<keyword id="KW-0143">Chaperone</keyword>
<keyword id="KW-1015">Disulfide bond</keyword>
<keyword id="KW-0472">Membrane</keyword>
<keyword id="KW-0479">Metal-binding</keyword>
<keyword id="KW-0496">Mitochondrion</keyword>
<keyword id="KW-0999">Mitochondrion inner membrane</keyword>
<keyword id="KW-0653">Protein transport</keyword>
<keyword id="KW-1185">Reference proteome</keyword>
<keyword id="KW-0811">Translocation</keyword>
<keyword id="KW-0813">Transport</keyword>
<keyword id="KW-0862">Zinc</keyword>
<name>TIM13_CAEEL</name>